<sequence>MSAIYNFCAGPAMLPAAVMKKAQQELLDWNGQGVSVMEISHRSKEFIALTEQAESDLRELMQIPANYHVLFMHGGGRGQFSAVVNNFLGEQGKALYLVSGQWSSAALAEAQKLAGEAQIDSLNIVEKHNGLNAVVLPDLHKIDADYRYVHYCPNETVDGIEIFDELDSPWPIVADLSSTIMSREIDVSRYGLIYAGAQKNIGPSGLSIVIVRDDMLKLPSLPQSSIMDYRLAVEHDSMFNTPPTFAWYLAAEVFAWLKSTGGISSIAKINQQKAQMLYQCIDGNAFYRNGVVAANRSQMNVTFQLVNEALDSEFLKQAQIAGLVALKGHRIVGGMRASLYNAMPLDGIVALVKFMNEFAAKHS</sequence>
<name>SERC_SHEB5</name>
<comment type="function">
    <text evidence="1">Catalyzes the reversible conversion of 3-phosphohydroxypyruvate to phosphoserine and of 3-hydroxy-2-oxo-4-phosphonooxybutanoate to phosphohydroxythreonine.</text>
</comment>
<comment type="catalytic activity">
    <reaction evidence="1">
        <text>O-phospho-L-serine + 2-oxoglutarate = 3-phosphooxypyruvate + L-glutamate</text>
        <dbReference type="Rhea" id="RHEA:14329"/>
        <dbReference type="ChEBI" id="CHEBI:16810"/>
        <dbReference type="ChEBI" id="CHEBI:18110"/>
        <dbReference type="ChEBI" id="CHEBI:29985"/>
        <dbReference type="ChEBI" id="CHEBI:57524"/>
        <dbReference type="EC" id="2.6.1.52"/>
    </reaction>
</comment>
<comment type="catalytic activity">
    <reaction evidence="1">
        <text>4-(phosphooxy)-L-threonine + 2-oxoglutarate = (R)-3-hydroxy-2-oxo-4-phosphooxybutanoate + L-glutamate</text>
        <dbReference type="Rhea" id="RHEA:16573"/>
        <dbReference type="ChEBI" id="CHEBI:16810"/>
        <dbReference type="ChEBI" id="CHEBI:29985"/>
        <dbReference type="ChEBI" id="CHEBI:58452"/>
        <dbReference type="ChEBI" id="CHEBI:58538"/>
        <dbReference type="EC" id="2.6.1.52"/>
    </reaction>
</comment>
<comment type="cofactor">
    <cofactor evidence="1">
        <name>pyridoxal 5'-phosphate</name>
        <dbReference type="ChEBI" id="CHEBI:597326"/>
    </cofactor>
    <text evidence="1">Binds 1 pyridoxal phosphate per subunit.</text>
</comment>
<comment type="pathway">
    <text evidence="1">Amino-acid biosynthesis; L-serine biosynthesis; L-serine from 3-phospho-D-glycerate: step 2/3.</text>
</comment>
<comment type="pathway">
    <text evidence="1">Cofactor biosynthesis; pyridoxine 5'-phosphate biosynthesis; pyridoxine 5'-phosphate from D-erythrose 4-phosphate: step 3/5.</text>
</comment>
<comment type="subunit">
    <text evidence="1">Homodimer.</text>
</comment>
<comment type="subcellular location">
    <subcellularLocation>
        <location evidence="1">Cytoplasm</location>
    </subcellularLocation>
</comment>
<comment type="similarity">
    <text evidence="1">Belongs to the class-V pyridoxal-phosphate-dependent aminotransferase family. SerC subfamily.</text>
</comment>
<dbReference type="EC" id="2.6.1.52" evidence="1"/>
<dbReference type="EMBL" id="CP000563">
    <property type="protein sequence ID" value="ABN61564.1"/>
    <property type="molecule type" value="Genomic_DNA"/>
</dbReference>
<dbReference type="RefSeq" id="WP_011846769.1">
    <property type="nucleotide sequence ID" value="NC_009052.1"/>
</dbReference>
<dbReference type="SMR" id="A3D4A1"/>
<dbReference type="STRING" id="325240.Sbal_2063"/>
<dbReference type="KEGG" id="sbl:Sbal_2063"/>
<dbReference type="HOGENOM" id="CLU_034866_0_2_6"/>
<dbReference type="OrthoDB" id="9809412at2"/>
<dbReference type="UniPathway" id="UPA00135">
    <property type="reaction ID" value="UER00197"/>
</dbReference>
<dbReference type="UniPathway" id="UPA00244">
    <property type="reaction ID" value="UER00311"/>
</dbReference>
<dbReference type="Proteomes" id="UP000001557">
    <property type="component" value="Chromosome"/>
</dbReference>
<dbReference type="GO" id="GO:0005737">
    <property type="term" value="C:cytoplasm"/>
    <property type="evidence" value="ECO:0007669"/>
    <property type="project" value="UniProtKB-SubCell"/>
</dbReference>
<dbReference type="GO" id="GO:0004648">
    <property type="term" value="F:O-phospho-L-serine:2-oxoglutarate aminotransferase activity"/>
    <property type="evidence" value="ECO:0007669"/>
    <property type="project" value="UniProtKB-UniRule"/>
</dbReference>
<dbReference type="GO" id="GO:0030170">
    <property type="term" value="F:pyridoxal phosphate binding"/>
    <property type="evidence" value="ECO:0007669"/>
    <property type="project" value="UniProtKB-UniRule"/>
</dbReference>
<dbReference type="GO" id="GO:0006564">
    <property type="term" value="P:L-serine biosynthetic process"/>
    <property type="evidence" value="ECO:0007669"/>
    <property type="project" value="UniProtKB-UniRule"/>
</dbReference>
<dbReference type="GO" id="GO:0008615">
    <property type="term" value="P:pyridoxine biosynthetic process"/>
    <property type="evidence" value="ECO:0007669"/>
    <property type="project" value="UniProtKB-UniRule"/>
</dbReference>
<dbReference type="FunFam" id="3.40.640.10:FF:000010">
    <property type="entry name" value="Phosphoserine aminotransferase"/>
    <property type="match status" value="1"/>
</dbReference>
<dbReference type="FunFam" id="3.90.1150.10:FF:000006">
    <property type="entry name" value="Phosphoserine aminotransferase"/>
    <property type="match status" value="1"/>
</dbReference>
<dbReference type="Gene3D" id="3.90.1150.10">
    <property type="entry name" value="Aspartate Aminotransferase, domain 1"/>
    <property type="match status" value="1"/>
</dbReference>
<dbReference type="Gene3D" id="3.40.640.10">
    <property type="entry name" value="Type I PLP-dependent aspartate aminotransferase-like (Major domain)"/>
    <property type="match status" value="1"/>
</dbReference>
<dbReference type="HAMAP" id="MF_00160">
    <property type="entry name" value="SerC_aminotrans_5"/>
    <property type="match status" value="1"/>
</dbReference>
<dbReference type="InterPro" id="IPR000192">
    <property type="entry name" value="Aminotrans_V_dom"/>
</dbReference>
<dbReference type="InterPro" id="IPR020578">
    <property type="entry name" value="Aminotrans_V_PyrdxlP_BS"/>
</dbReference>
<dbReference type="InterPro" id="IPR022278">
    <property type="entry name" value="Pser_aminoTfrase"/>
</dbReference>
<dbReference type="InterPro" id="IPR015424">
    <property type="entry name" value="PyrdxlP-dep_Trfase"/>
</dbReference>
<dbReference type="InterPro" id="IPR015421">
    <property type="entry name" value="PyrdxlP-dep_Trfase_major"/>
</dbReference>
<dbReference type="InterPro" id="IPR015422">
    <property type="entry name" value="PyrdxlP-dep_Trfase_small"/>
</dbReference>
<dbReference type="NCBIfam" id="NF003764">
    <property type="entry name" value="PRK05355.1"/>
    <property type="match status" value="1"/>
</dbReference>
<dbReference type="NCBIfam" id="TIGR01364">
    <property type="entry name" value="serC_1"/>
    <property type="match status" value="1"/>
</dbReference>
<dbReference type="PANTHER" id="PTHR43247">
    <property type="entry name" value="PHOSPHOSERINE AMINOTRANSFERASE"/>
    <property type="match status" value="1"/>
</dbReference>
<dbReference type="PANTHER" id="PTHR43247:SF1">
    <property type="entry name" value="PHOSPHOSERINE AMINOTRANSFERASE"/>
    <property type="match status" value="1"/>
</dbReference>
<dbReference type="Pfam" id="PF00266">
    <property type="entry name" value="Aminotran_5"/>
    <property type="match status" value="1"/>
</dbReference>
<dbReference type="PIRSF" id="PIRSF000525">
    <property type="entry name" value="SerC"/>
    <property type="match status" value="1"/>
</dbReference>
<dbReference type="SUPFAM" id="SSF53383">
    <property type="entry name" value="PLP-dependent transferases"/>
    <property type="match status" value="1"/>
</dbReference>
<dbReference type="PROSITE" id="PS00595">
    <property type="entry name" value="AA_TRANSFER_CLASS_5"/>
    <property type="match status" value="1"/>
</dbReference>
<organism>
    <name type="scientific">Shewanella baltica (strain OS155 / ATCC BAA-1091)</name>
    <dbReference type="NCBI Taxonomy" id="325240"/>
    <lineage>
        <taxon>Bacteria</taxon>
        <taxon>Pseudomonadati</taxon>
        <taxon>Pseudomonadota</taxon>
        <taxon>Gammaproteobacteria</taxon>
        <taxon>Alteromonadales</taxon>
        <taxon>Shewanellaceae</taxon>
        <taxon>Shewanella</taxon>
    </lineage>
</organism>
<protein>
    <recommendedName>
        <fullName evidence="1">Phosphoserine aminotransferase</fullName>
        <ecNumber evidence="1">2.6.1.52</ecNumber>
    </recommendedName>
    <alternativeName>
        <fullName evidence="1">Phosphohydroxythreonine aminotransferase</fullName>
        <shortName evidence="1">PSAT</shortName>
    </alternativeName>
</protein>
<gene>
    <name evidence="1" type="primary">serC</name>
    <name type="ordered locus">Sbal_2063</name>
</gene>
<feature type="chain" id="PRO_1000203563" description="Phosphoserine aminotransferase">
    <location>
        <begin position="1"/>
        <end position="363"/>
    </location>
</feature>
<feature type="binding site" evidence="1">
    <location>
        <position position="42"/>
    </location>
    <ligand>
        <name>L-glutamate</name>
        <dbReference type="ChEBI" id="CHEBI:29985"/>
    </ligand>
</feature>
<feature type="binding site" evidence="1">
    <location>
        <begin position="76"/>
        <end position="77"/>
    </location>
    <ligand>
        <name>pyridoxal 5'-phosphate</name>
        <dbReference type="ChEBI" id="CHEBI:597326"/>
    </ligand>
</feature>
<feature type="binding site" evidence="1">
    <location>
        <position position="102"/>
    </location>
    <ligand>
        <name>pyridoxal 5'-phosphate</name>
        <dbReference type="ChEBI" id="CHEBI:597326"/>
    </ligand>
</feature>
<feature type="binding site" evidence="1">
    <location>
        <position position="156"/>
    </location>
    <ligand>
        <name>pyridoxal 5'-phosphate</name>
        <dbReference type="ChEBI" id="CHEBI:597326"/>
    </ligand>
</feature>
<feature type="binding site" evidence="1">
    <location>
        <position position="175"/>
    </location>
    <ligand>
        <name>pyridoxal 5'-phosphate</name>
        <dbReference type="ChEBI" id="CHEBI:597326"/>
    </ligand>
</feature>
<feature type="binding site" evidence="1">
    <location>
        <position position="198"/>
    </location>
    <ligand>
        <name>pyridoxal 5'-phosphate</name>
        <dbReference type="ChEBI" id="CHEBI:597326"/>
    </ligand>
</feature>
<feature type="binding site" evidence="1">
    <location>
        <begin position="240"/>
        <end position="241"/>
    </location>
    <ligand>
        <name>pyridoxal 5'-phosphate</name>
        <dbReference type="ChEBI" id="CHEBI:597326"/>
    </ligand>
</feature>
<feature type="modified residue" description="N6-(pyridoxal phosphate)lysine" evidence="1">
    <location>
        <position position="199"/>
    </location>
</feature>
<accession>A3D4A1</accession>
<proteinExistence type="inferred from homology"/>
<reference key="1">
    <citation type="submission" date="2007-02" db="EMBL/GenBank/DDBJ databases">
        <title>Complete sequence of chromosome of Shewanella baltica OS155.</title>
        <authorList>
            <consortium name="US DOE Joint Genome Institute"/>
            <person name="Copeland A."/>
            <person name="Lucas S."/>
            <person name="Lapidus A."/>
            <person name="Barry K."/>
            <person name="Detter J.C."/>
            <person name="Glavina del Rio T."/>
            <person name="Hammon N."/>
            <person name="Israni S."/>
            <person name="Dalin E."/>
            <person name="Tice H."/>
            <person name="Pitluck S."/>
            <person name="Sims D.R."/>
            <person name="Brettin T."/>
            <person name="Bruce D."/>
            <person name="Han C."/>
            <person name="Tapia R."/>
            <person name="Brainard J."/>
            <person name="Schmutz J."/>
            <person name="Larimer F."/>
            <person name="Land M."/>
            <person name="Hauser L."/>
            <person name="Kyrpides N."/>
            <person name="Mikhailova N."/>
            <person name="Brettar I."/>
            <person name="Klappenbach J."/>
            <person name="Konstantinidis K."/>
            <person name="Rodrigues J."/>
            <person name="Tiedje J."/>
            <person name="Richardson P."/>
        </authorList>
    </citation>
    <scope>NUCLEOTIDE SEQUENCE [LARGE SCALE GENOMIC DNA]</scope>
    <source>
        <strain>OS155 / ATCC BAA-1091</strain>
    </source>
</reference>
<evidence type="ECO:0000255" key="1">
    <source>
        <dbReference type="HAMAP-Rule" id="MF_00160"/>
    </source>
</evidence>
<keyword id="KW-0028">Amino-acid biosynthesis</keyword>
<keyword id="KW-0032">Aminotransferase</keyword>
<keyword id="KW-0963">Cytoplasm</keyword>
<keyword id="KW-0663">Pyridoxal phosphate</keyword>
<keyword id="KW-0664">Pyridoxine biosynthesis</keyword>
<keyword id="KW-1185">Reference proteome</keyword>
<keyword id="KW-0718">Serine biosynthesis</keyword>
<keyword id="KW-0808">Transferase</keyword>